<reference key="1">
    <citation type="journal article" date="1994" name="Nature">
        <title>2.2 Mb of contiguous nucleotide sequence from chromosome III of C. elegans.</title>
        <authorList>
            <person name="Wilson R."/>
            <person name="Ainscough R."/>
            <person name="Anderson K."/>
            <person name="Baynes C."/>
            <person name="Berks M."/>
            <person name="Bonfield J."/>
            <person name="Burton J."/>
            <person name="Connell M."/>
            <person name="Copsey T."/>
            <person name="Cooper J."/>
            <person name="Coulson A."/>
            <person name="Craxton M."/>
            <person name="Dear S."/>
            <person name="Du Z."/>
            <person name="Durbin R."/>
            <person name="Favello A."/>
            <person name="Fraser A."/>
            <person name="Fulton L."/>
            <person name="Gardner A."/>
            <person name="Green P."/>
            <person name="Hawkins T."/>
            <person name="Hillier L."/>
            <person name="Jier M."/>
            <person name="Johnston L."/>
            <person name="Jones M."/>
            <person name="Kershaw J."/>
            <person name="Kirsten J."/>
            <person name="Laisster N."/>
            <person name="Latreille P."/>
            <person name="Lightning J."/>
            <person name="Lloyd C."/>
            <person name="Mortimore B."/>
            <person name="O'Callaghan M."/>
            <person name="Parsons J."/>
            <person name="Percy C."/>
            <person name="Rifken L."/>
            <person name="Roopra A."/>
            <person name="Saunders D."/>
            <person name="Shownkeen R."/>
            <person name="Sims M."/>
            <person name="Smaldon N."/>
            <person name="Smith A."/>
            <person name="Smith M."/>
            <person name="Sonnhammer E."/>
            <person name="Staden R."/>
            <person name="Sulston J."/>
            <person name="Thierry-Mieg J."/>
            <person name="Thomas K."/>
            <person name="Vaudin M."/>
            <person name="Vaughan K."/>
            <person name="Waterston R."/>
            <person name="Watson A."/>
            <person name="Weinstock L."/>
            <person name="Wilkinson-Sproat J."/>
            <person name="Wohldman P."/>
        </authorList>
    </citation>
    <scope>NUCLEOTIDE SEQUENCE [LARGE SCALE GENOMIC DNA]</scope>
    <source>
        <strain>Bristol N2</strain>
    </source>
</reference>
<reference key="2">
    <citation type="journal article" date="1998" name="Science">
        <title>Genome sequence of the nematode C. elegans: a platform for investigating biology.</title>
        <authorList>
            <consortium name="The C. elegans sequencing consortium"/>
        </authorList>
    </citation>
    <scope>NUCLEOTIDE SEQUENCE [LARGE SCALE GENOMIC DNA]</scope>
    <source>
        <strain>Bristol N2</strain>
    </source>
</reference>
<reference key="3">
    <citation type="journal article" date="2012" name="Nature">
        <title>Programmed elimination of cells by caspase-independent cell extrusion in C. elegans.</title>
        <authorList>
            <person name="Denning D.P."/>
            <person name="Hatch V."/>
            <person name="Horvitz H.R."/>
        </authorList>
    </citation>
    <scope>FUNCTION</scope>
</reference>
<feature type="chain" id="PRO_0000120220" description="GTP exchange factor for ARFs 1">
    <location>
        <begin position="1"/>
        <end position="393"/>
    </location>
</feature>
<feature type="domain" description="SEC7" evidence="4">
    <location>
        <begin position="53"/>
        <end position="239"/>
    </location>
</feature>
<feature type="domain" description="PH" evidence="3">
    <location>
        <begin position="261"/>
        <end position="377"/>
    </location>
</feature>
<feature type="region of interest" description="Disordered" evidence="5">
    <location>
        <begin position="1"/>
        <end position="21"/>
    </location>
</feature>
<feature type="coiled-coil region" evidence="2">
    <location>
        <begin position="12"/>
        <end position="54"/>
    </location>
</feature>
<feature type="compositionally biased region" description="Polar residues" evidence="5">
    <location>
        <begin position="1"/>
        <end position="12"/>
    </location>
</feature>
<dbReference type="EMBL" id="FO080533">
    <property type="protein sequence ID" value="CCD64454.1"/>
    <property type="molecule type" value="Genomic_DNA"/>
</dbReference>
<dbReference type="PIR" id="S44844">
    <property type="entry name" value="S44844"/>
</dbReference>
<dbReference type="RefSeq" id="NP_498764.1">
    <property type="nucleotide sequence ID" value="NM_066363.4"/>
</dbReference>
<dbReference type="SMR" id="P34512"/>
<dbReference type="BioGRID" id="41346">
    <property type="interactions" value="2"/>
</dbReference>
<dbReference type="FunCoup" id="P34512">
    <property type="interactions" value="1249"/>
</dbReference>
<dbReference type="IntAct" id="P34512">
    <property type="interactions" value="1"/>
</dbReference>
<dbReference type="STRING" id="6239.K06H7.4.1"/>
<dbReference type="PaxDb" id="6239-K06H7.4"/>
<dbReference type="PeptideAtlas" id="P34512"/>
<dbReference type="EnsemblMetazoa" id="K06H7.4.1">
    <property type="protein sequence ID" value="K06H7.4.1"/>
    <property type="gene ID" value="WBGene00001743"/>
</dbReference>
<dbReference type="GeneID" id="176140"/>
<dbReference type="KEGG" id="cel:CELE_K06H7.4"/>
<dbReference type="UCSC" id="K06H7.4.1">
    <property type="organism name" value="c. elegans"/>
</dbReference>
<dbReference type="AGR" id="WB:WBGene00001743"/>
<dbReference type="CTD" id="176140"/>
<dbReference type="WormBase" id="K06H7.4">
    <property type="protein sequence ID" value="CE26942"/>
    <property type="gene ID" value="WBGene00001743"/>
    <property type="gene designation" value="grp-1"/>
</dbReference>
<dbReference type="eggNOG" id="KOG0930">
    <property type="taxonomic scope" value="Eukaryota"/>
</dbReference>
<dbReference type="GeneTree" id="ENSGT00940000160865"/>
<dbReference type="HOGENOM" id="CLU_032820_3_0_1"/>
<dbReference type="InParanoid" id="P34512"/>
<dbReference type="OMA" id="GASHWRA"/>
<dbReference type="OrthoDB" id="430364at2759"/>
<dbReference type="PhylomeDB" id="P34512"/>
<dbReference type="PRO" id="PR:P34512"/>
<dbReference type="Proteomes" id="UP000001940">
    <property type="component" value="Chromosome III"/>
</dbReference>
<dbReference type="GO" id="GO:0030496">
    <property type="term" value="C:midbody"/>
    <property type="evidence" value="ECO:0000314"/>
    <property type="project" value="WormBase"/>
</dbReference>
<dbReference type="GO" id="GO:0005634">
    <property type="term" value="C:nucleus"/>
    <property type="evidence" value="ECO:0000314"/>
    <property type="project" value="WormBase"/>
</dbReference>
<dbReference type="GO" id="GO:0005085">
    <property type="term" value="F:guanyl-nucleotide exchange factor activity"/>
    <property type="evidence" value="ECO:0007669"/>
    <property type="project" value="UniProtKB-KW"/>
</dbReference>
<dbReference type="GO" id="GO:0032012">
    <property type="term" value="P:regulation of ARF protein signal transduction"/>
    <property type="evidence" value="ECO:0007669"/>
    <property type="project" value="InterPro"/>
</dbReference>
<dbReference type="CDD" id="cd01252">
    <property type="entry name" value="PH_GRP1-like"/>
    <property type="match status" value="1"/>
</dbReference>
<dbReference type="CDD" id="cd00171">
    <property type="entry name" value="Sec7"/>
    <property type="match status" value="1"/>
</dbReference>
<dbReference type="FunFam" id="1.10.1000.11:FF:000015">
    <property type="entry name" value="GTP exchange factor for ARFs 1"/>
    <property type="match status" value="1"/>
</dbReference>
<dbReference type="Gene3D" id="1.10.220.20">
    <property type="match status" value="1"/>
</dbReference>
<dbReference type="Gene3D" id="1.10.1000.11">
    <property type="entry name" value="Arf Nucleotide-binding Site Opener,domain 2"/>
    <property type="match status" value="1"/>
</dbReference>
<dbReference type="Gene3D" id="2.30.29.30">
    <property type="entry name" value="Pleckstrin-homology domain (PH domain)/Phosphotyrosine-binding domain (PTB)"/>
    <property type="match status" value="1"/>
</dbReference>
<dbReference type="InterPro" id="IPR011993">
    <property type="entry name" value="PH-like_dom_sf"/>
</dbReference>
<dbReference type="InterPro" id="IPR001849">
    <property type="entry name" value="PH_domain"/>
</dbReference>
<dbReference type="InterPro" id="IPR023394">
    <property type="entry name" value="Sec7_C_sf"/>
</dbReference>
<dbReference type="InterPro" id="IPR000904">
    <property type="entry name" value="Sec7_dom"/>
</dbReference>
<dbReference type="InterPro" id="IPR035999">
    <property type="entry name" value="Sec7_dom_sf"/>
</dbReference>
<dbReference type="PANTHER" id="PTHR10663">
    <property type="entry name" value="GUANYL-NUCLEOTIDE EXCHANGE FACTOR"/>
    <property type="match status" value="1"/>
</dbReference>
<dbReference type="PANTHER" id="PTHR10663:SF402">
    <property type="entry name" value="MIP16918P"/>
    <property type="match status" value="1"/>
</dbReference>
<dbReference type="Pfam" id="PF00169">
    <property type="entry name" value="PH"/>
    <property type="match status" value="1"/>
</dbReference>
<dbReference type="Pfam" id="PF01369">
    <property type="entry name" value="Sec7"/>
    <property type="match status" value="1"/>
</dbReference>
<dbReference type="SMART" id="SM00233">
    <property type="entry name" value="PH"/>
    <property type="match status" value="1"/>
</dbReference>
<dbReference type="SMART" id="SM00222">
    <property type="entry name" value="Sec7"/>
    <property type="match status" value="1"/>
</dbReference>
<dbReference type="SUPFAM" id="SSF50729">
    <property type="entry name" value="PH domain-like"/>
    <property type="match status" value="1"/>
</dbReference>
<dbReference type="SUPFAM" id="SSF48425">
    <property type="entry name" value="Sec7 domain"/>
    <property type="match status" value="1"/>
</dbReference>
<dbReference type="PROSITE" id="PS50003">
    <property type="entry name" value="PH_DOMAIN"/>
    <property type="match status" value="1"/>
</dbReference>
<dbReference type="PROSITE" id="PS50190">
    <property type="entry name" value="SEC7"/>
    <property type="match status" value="1"/>
</dbReference>
<sequence length="393" mass="45082">MSSRYSERNGLSETEKMTLPKVRKRKAQLVDEIEALKNEVREVDEELDQVYYTHPKSKEYHKIVVNGRKKFNQDPWKALDWLASRNVVAKDPQALALWMKAGEGLSKSAIGEILGDNRPFALETLDRFTKEHKLHDVPIVPALRQYLFSFRLPGESQKINRILEKFAEVYANQNPSYGNADQAHTVAYSCIMVNTLLHNPNVKDKPSLEKYIEMNEQLLEKGAITIEQLTEVYESVSVTQFKIPDEVSTSGKGTVNDILLHAEREGWLFKQSSNPLFSGALSWKKRWFVLSENCLYYFDQMTDKEPKGIITLANVGIRKVEAPSRPFMFEIFSLSDGQIKACKTEQDGRLVEGRHSIYKICAVNDEDMRSWINAISRMMAPQQHLLARPKSTH</sequence>
<organism>
    <name type="scientific">Caenorhabditis elegans</name>
    <dbReference type="NCBI Taxonomy" id="6239"/>
    <lineage>
        <taxon>Eukaryota</taxon>
        <taxon>Metazoa</taxon>
        <taxon>Ecdysozoa</taxon>
        <taxon>Nematoda</taxon>
        <taxon>Chromadorea</taxon>
        <taxon>Rhabditida</taxon>
        <taxon>Rhabditina</taxon>
        <taxon>Rhabditomorpha</taxon>
        <taxon>Rhabditoidea</taxon>
        <taxon>Rhabditidae</taxon>
        <taxon>Peloderinae</taxon>
        <taxon>Caenorhabditis</taxon>
    </lineage>
</organism>
<comment type="function">
    <text evidence="1 6">Promotes guanine-nucleotide exchange on ARF. Promotes the activation of ARF through replacement of GDP with GTP (By similarity). Plays a role in cell shedding during embryogenesis, probably by promoting the endocytosis of cell adhesion molecules (PubMed:22801495).</text>
</comment>
<proteinExistence type="inferred from homology"/>
<keyword id="KW-0175">Coiled coil</keyword>
<keyword id="KW-0344">Guanine-nucleotide releasing factor</keyword>
<keyword id="KW-1185">Reference proteome</keyword>
<accession>P34512</accession>
<gene>
    <name type="primary">grp-1</name>
    <name type="ORF">K06H7.4</name>
</gene>
<name>GRP1_CAEEL</name>
<protein>
    <recommendedName>
        <fullName>GTP exchange factor for ARFs 1</fullName>
    </recommendedName>
</protein>
<evidence type="ECO:0000250" key="1"/>
<evidence type="ECO:0000255" key="2"/>
<evidence type="ECO:0000255" key="3">
    <source>
        <dbReference type="PROSITE-ProRule" id="PRU00145"/>
    </source>
</evidence>
<evidence type="ECO:0000255" key="4">
    <source>
        <dbReference type="PROSITE-ProRule" id="PRU00189"/>
    </source>
</evidence>
<evidence type="ECO:0000256" key="5">
    <source>
        <dbReference type="SAM" id="MobiDB-lite"/>
    </source>
</evidence>
<evidence type="ECO:0000269" key="6">
    <source>
    </source>
</evidence>